<evidence type="ECO:0000250" key="1"/>
<evidence type="ECO:0000255" key="2">
    <source>
        <dbReference type="HAMAP-Rule" id="MF_00047"/>
    </source>
</evidence>
<feature type="chain" id="PRO_1000030513" description="D-alanine--D-alanine ligase">
    <location>
        <begin position="1"/>
        <end position="353"/>
    </location>
</feature>
<feature type="domain" description="ATP-grasp" evidence="2">
    <location>
        <begin position="141"/>
        <end position="349"/>
    </location>
</feature>
<feature type="binding site" evidence="2">
    <location>
        <begin position="176"/>
        <end position="231"/>
    </location>
    <ligand>
        <name>ATP</name>
        <dbReference type="ChEBI" id="CHEBI:30616"/>
    </ligand>
</feature>
<feature type="binding site" evidence="2">
    <location>
        <position position="302"/>
    </location>
    <ligand>
        <name>Mg(2+)</name>
        <dbReference type="ChEBI" id="CHEBI:18420"/>
        <label>1</label>
    </ligand>
</feature>
<feature type="binding site" evidence="2">
    <location>
        <position position="316"/>
    </location>
    <ligand>
        <name>Mg(2+)</name>
        <dbReference type="ChEBI" id="CHEBI:18420"/>
        <label>1</label>
    </ligand>
</feature>
<feature type="binding site" evidence="2">
    <location>
        <position position="316"/>
    </location>
    <ligand>
        <name>Mg(2+)</name>
        <dbReference type="ChEBI" id="CHEBI:18420"/>
        <label>2</label>
    </ligand>
</feature>
<feature type="binding site" evidence="2">
    <location>
        <position position="318"/>
    </location>
    <ligand>
        <name>Mg(2+)</name>
        <dbReference type="ChEBI" id="CHEBI:18420"/>
        <label>2</label>
    </ligand>
</feature>
<name>DDL_SYNS3</name>
<proteinExistence type="inferred from homology"/>
<reference key="1">
    <citation type="journal article" date="2006" name="Proc. Natl. Acad. Sci. U.S.A.">
        <title>Genome sequence of Synechococcus CC9311: insights into adaptation to a coastal environment.</title>
        <authorList>
            <person name="Palenik B."/>
            <person name="Ren Q."/>
            <person name="Dupont C.L."/>
            <person name="Myers G.S."/>
            <person name="Heidelberg J.F."/>
            <person name="Badger J.H."/>
            <person name="Madupu R."/>
            <person name="Nelson W.C."/>
            <person name="Brinkac L.M."/>
            <person name="Dodson R.J."/>
            <person name="Durkin A.S."/>
            <person name="Daugherty S.C."/>
            <person name="Sullivan S.A."/>
            <person name="Khouri H."/>
            <person name="Mohamoud Y."/>
            <person name="Halpin R."/>
            <person name="Paulsen I.T."/>
        </authorList>
    </citation>
    <scope>NUCLEOTIDE SEQUENCE [LARGE SCALE GENOMIC DNA]</scope>
    <source>
        <strain>CC9311</strain>
    </source>
</reference>
<dbReference type="EC" id="6.3.2.4" evidence="2"/>
<dbReference type="EMBL" id="CP000435">
    <property type="protein sequence ID" value="ABI47405.1"/>
    <property type="molecule type" value="Genomic_DNA"/>
</dbReference>
<dbReference type="RefSeq" id="WP_011618678.1">
    <property type="nucleotide sequence ID" value="NC_008319.1"/>
</dbReference>
<dbReference type="SMR" id="Q0IC71"/>
<dbReference type="STRING" id="64471.sync_0734"/>
<dbReference type="KEGG" id="syg:sync_0734"/>
<dbReference type="eggNOG" id="COG1181">
    <property type="taxonomic scope" value="Bacteria"/>
</dbReference>
<dbReference type="HOGENOM" id="CLU_039268_0_0_3"/>
<dbReference type="OrthoDB" id="9813261at2"/>
<dbReference type="UniPathway" id="UPA00219"/>
<dbReference type="Proteomes" id="UP000001961">
    <property type="component" value="Chromosome"/>
</dbReference>
<dbReference type="GO" id="GO:0005829">
    <property type="term" value="C:cytosol"/>
    <property type="evidence" value="ECO:0007669"/>
    <property type="project" value="TreeGrafter"/>
</dbReference>
<dbReference type="GO" id="GO:0005524">
    <property type="term" value="F:ATP binding"/>
    <property type="evidence" value="ECO:0007669"/>
    <property type="project" value="UniProtKB-KW"/>
</dbReference>
<dbReference type="GO" id="GO:0008716">
    <property type="term" value="F:D-alanine-D-alanine ligase activity"/>
    <property type="evidence" value="ECO:0007669"/>
    <property type="project" value="UniProtKB-UniRule"/>
</dbReference>
<dbReference type="GO" id="GO:0046872">
    <property type="term" value="F:metal ion binding"/>
    <property type="evidence" value="ECO:0007669"/>
    <property type="project" value="UniProtKB-KW"/>
</dbReference>
<dbReference type="GO" id="GO:0071555">
    <property type="term" value="P:cell wall organization"/>
    <property type="evidence" value="ECO:0007669"/>
    <property type="project" value="UniProtKB-KW"/>
</dbReference>
<dbReference type="GO" id="GO:0009252">
    <property type="term" value="P:peptidoglycan biosynthetic process"/>
    <property type="evidence" value="ECO:0007669"/>
    <property type="project" value="UniProtKB-UniRule"/>
</dbReference>
<dbReference type="GO" id="GO:0008360">
    <property type="term" value="P:regulation of cell shape"/>
    <property type="evidence" value="ECO:0007669"/>
    <property type="project" value="UniProtKB-KW"/>
</dbReference>
<dbReference type="FunFam" id="3.30.1490.20:FF:000007">
    <property type="entry name" value="D-alanine--D-alanine ligase"/>
    <property type="match status" value="1"/>
</dbReference>
<dbReference type="FunFam" id="3.30.470.20:FF:000008">
    <property type="entry name" value="D-alanine--D-alanine ligase"/>
    <property type="match status" value="1"/>
</dbReference>
<dbReference type="Gene3D" id="3.40.50.20">
    <property type="match status" value="1"/>
</dbReference>
<dbReference type="Gene3D" id="3.30.1490.20">
    <property type="entry name" value="ATP-grasp fold, A domain"/>
    <property type="match status" value="1"/>
</dbReference>
<dbReference type="Gene3D" id="3.30.470.20">
    <property type="entry name" value="ATP-grasp fold, B domain"/>
    <property type="match status" value="1"/>
</dbReference>
<dbReference type="HAMAP" id="MF_00047">
    <property type="entry name" value="Dala_Dala_lig"/>
    <property type="match status" value="1"/>
</dbReference>
<dbReference type="InterPro" id="IPR011761">
    <property type="entry name" value="ATP-grasp"/>
</dbReference>
<dbReference type="InterPro" id="IPR013815">
    <property type="entry name" value="ATP_grasp_subdomain_1"/>
</dbReference>
<dbReference type="InterPro" id="IPR000291">
    <property type="entry name" value="D-Ala_lig_Van_CS"/>
</dbReference>
<dbReference type="InterPro" id="IPR005905">
    <property type="entry name" value="D_ala_D_ala"/>
</dbReference>
<dbReference type="InterPro" id="IPR011095">
    <property type="entry name" value="Dala_Dala_lig_C"/>
</dbReference>
<dbReference type="InterPro" id="IPR011127">
    <property type="entry name" value="Dala_Dala_lig_N"/>
</dbReference>
<dbReference type="InterPro" id="IPR016185">
    <property type="entry name" value="PreATP-grasp_dom_sf"/>
</dbReference>
<dbReference type="NCBIfam" id="TIGR01205">
    <property type="entry name" value="D_ala_D_alaTIGR"/>
    <property type="match status" value="1"/>
</dbReference>
<dbReference type="NCBIfam" id="NF002528">
    <property type="entry name" value="PRK01966.1-4"/>
    <property type="match status" value="1"/>
</dbReference>
<dbReference type="PANTHER" id="PTHR23132">
    <property type="entry name" value="D-ALANINE--D-ALANINE LIGASE"/>
    <property type="match status" value="1"/>
</dbReference>
<dbReference type="PANTHER" id="PTHR23132:SF25">
    <property type="entry name" value="D-ALANINE--D-ALANINE LIGASE A"/>
    <property type="match status" value="1"/>
</dbReference>
<dbReference type="Pfam" id="PF07478">
    <property type="entry name" value="Dala_Dala_lig_C"/>
    <property type="match status" value="1"/>
</dbReference>
<dbReference type="Pfam" id="PF01820">
    <property type="entry name" value="Dala_Dala_lig_N"/>
    <property type="match status" value="1"/>
</dbReference>
<dbReference type="PIRSF" id="PIRSF039102">
    <property type="entry name" value="Ddl/VanB"/>
    <property type="match status" value="1"/>
</dbReference>
<dbReference type="SUPFAM" id="SSF56059">
    <property type="entry name" value="Glutathione synthetase ATP-binding domain-like"/>
    <property type="match status" value="1"/>
</dbReference>
<dbReference type="SUPFAM" id="SSF52440">
    <property type="entry name" value="PreATP-grasp domain"/>
    <property type="match status" value="1"/>
</dbReference>
<dbReference type="PROSITE" id="PS50975">
    <property type="entry name" value="ATP_GRASP"/>
    <property type="match status" value="1"/>
</dbReference>
<dbReference type="PROSITE" id="PS00843">
    <property type="entry name" value="DALA_DALA_LIGASE_1"/>
    <property type="match status" value="1"/>
</dbReference>
<dbReference type="PROSITE" id="PS00844">
    <property type="entry name" value="DALA_DALA_LIGASE_2"/>
    <property type="match status" value="1"/>
</dbReference>
<sequence>MPSSPVRIGVVFGGASGEHAVSIRSAITVINALQEGQNRDHFEVVPLYIDQEGRWWPEHIANSVLEQKQPLAEDSLPHPLPPAGFRSLPIDNDRVDVWFPVLHGPNGEDGTVQGLFTLMGQPYVGSGVLGSAVGMDKLAMKAAFAAAGLPQVPYVGLNVADLNHPERQNKLVARIEAELGYPCFVKPANMGSSVGISKARHRDQLLAGLKEAARHDTRLVVEHGVSARELECAVLGRQQLKASVVGEISFEADWYDYETKYTDGCSQTLIPAPLPDQVSAQIQAIALQACTAVHAYGLARVDVFYDEKSGDIWLNEINTLPGFTSQSMYPMLWEASGVALPDLVAQLVHTARE</sequence>
<organism>
    <name type="scientific">Synechococcus sp. (strain CC9311)</name>
    <dbReference type="NCBI Taxonomy" id="64471"/>
    <lineage>
        <taxon>Bacteria</taxon>
        <taxon>Bacillati</taxon>
        <taxon>Cyanobacteriota</taxon>
        <taxon>Cyanophyceae</taxon>
        <taxon>Synechococcales</taxon>
        <taxon>Synechococcaceae</taxon>
        <taxon>Synechococcus</taxon>
    </lineage>
</organism>
<accession>Q0IC71</accession>
<comment type="function">
    <text evidence="2">Cell wall formation.</text>
</comment>
<comment type="catalytic activity">
    <reaction evidence="2">
        <text>2 D-alanine + ATP = D-alanyl-D-alanine + ADP + phosphate + H(+)</text>
        <dbReference type="Rhea" id="RHEA:11224"/>
        <dbReference type="ChEBI" id="CHEBI:15378"/>
        <dbReference type="ChEBI" id="CHEBI:30616"/>
        <dbReference type="ChEBI" id="CHEBI:43474"/>
        <dbReference type="ChEBI" id="CHEBI:57416"/>
        <dbReference type="ChEBI" id="CHEBI:57822"/>
        <dbReference type="ChEBI" id="CHEBI:456216"/>
        <dbReference type="EC" id="6.3.2.4"/>
    </reaction>
</comment>
<comment type="cofactor">
    <cofactor evidence="1">
        <name>Mg(2+)</name>
        <dbReference type="ChEBI" id="CHEBI:18420"/>
    </cofactor>
    <cofactor evidence="1">
        <name>Mn(2+)</name>
        <dbReference type="ChEBI" id="CHEBI:29035"/>
    </cofactor>
    <text evidence="1">Binds 2 magnesium or manganese ions per subunit.</text>
</comment>
<comment type="pathway">
    <text evidence="2">Cell wall biogenesis; peptidoglycan biosynthesis.</text>
</comment>
<comment type="subcellular location">
    <subcellularLocation>
        <location evidence="2">Cytoplasm</location>
    </subcellularLocation>
</comment>
<comment type="similarity">
    <text evidence="2">Belongs to the D-alanine--D-alanine ligase family.</text>
</comment>
<protein>
    <recommendedName>
        <fullName evidence="2">D-alanine--D-alanine ligase</fullName>
        <ecNumber evidence="2">6.3.2.4</ecNumber>
    </recommendedName>
    <alternativeName>
        <fullName evidence="2">D-Ala-D-Ala ligase</fullName>
    </alternativeName>
    <alternativeName>
        <fullName evidence="2">D-alanylalanine synthetase</fullName>
    </alternativeName>
</protein>
<keyword id="KW-0067">ATP-binding</keyword>
<keyword id="KW-0133">Cell shape</keyword>
<keyword id="KW-0961">Cell wall biogenesis/degradation</keyword>
<keyword id="KW-0963">Cytoplasm</keyword>
<keyword id="KW-0436">Ligase</keyword>
<keyword id="KW-0460">Magnesium</keyword>
<keyword id="KW-0464">Manganese</keyword>
<keyword id="KW-0479">Metal-binding</keyword>
<keyword id="KW-0547">Nucleotide-binding</keyword>
<keyword id="KW-0573">Peptidoglycan synthesis</keyword>
<keyword id="KW-1185">Reference proteome</keyword>
<gene>
    <name evidence="2" type="primary">ddl</name>
    <name type="ordered locus">sync_0734</name>
</gene>